<protein>
    <recommendedName>
        <fullName evidence="1">Protein-methionine-sulfoxide reductase catalytic subunit MsrP</fullName>
        <ecNumber evidence="1">1.8.5.-</ecNumber>
    </recommendedName>
</protein>
<reference key="1">
    <citation type="journal article" date="2004" name="Nature">
        <title>Genome sequence of Silicibacter pomeroyi reveals adaptations to the marine environment.</title>
        <authorList>
            <person name="Moran M.A."/>
            <person name="Buchan A."/>
            <person name="Gonzalez J.M."/>
            <person name="Heidelberg J.F."/>
            <person name="Whitman W.B."/>
            <person name="Kiene R.P."/>
            <person name="Henriksen J.R."/>
            <person name="King G.M."/>
            <person name="Belas R."/>
            <person name="Fuqua C."/>
            <person name="Brinkac L.M."/>
            <person name="Lewis M."/>
            <person name="Johri S."/>
            <person name="Weaver B."/>
            <person name="Pai G."/>
            <person name="Eisen J.A."/>
            <person name="Rahe E."/>
            <person name="Sheldon W.M."/>
            <person name="Ye W."/>
            <person name="Miller T.R."/>
            <person name="Carlton J."/>
            <person name="Rasko D.A."/>
            <person name="Paulsen I.T."/>
            <person name="Ren Q."/>
            <person name="Daugherty S.C."/>
            <person name="DeBoy R.T."/>
            <person name="Dodson R.J."/>
            <person name="Durkin A.S."/>
            <person name="Madupu R."/>
            <person name="Nelson W.C."/>
            <person name="Sullivan S.A."/>
            <person name="Rosovitz M.J."/>
            <person name="Haft D.H."/>
            <person name="Selengut J."/>
            <person name="Ward N."/>
        </authorList>
    </citation>
    <scope>NUCLEOTIDE SEQUENCE [LARGE SCALE GENOMIC DNA]</scope>
    <source>
        <strain>ATCC 700808 / DSM 15171 / DSS-3</strain>
    </source>
</reference>
<reference key="2">
    <citation type="journal article" date="2014" name="Stand. Genomic Sci.">
        <title>An updated genome annotation for the model marine bacterium Ruegeria pomeroyi DSS-3.</title>
        <authorList>
            <person name="Rivers A.R."/>
            <person name="Smith C.B."/>
            <person name="Moran M.A."/>
        </authorList>
    </citation>
    <scope>GENOME REANNOTATION</scope>
    <source>
        <strain>ATCC 700808 / DSM 15171 / DSS-3</strain>
    </source>
</reference>
<dbReference type="EC" id="1.8.5.-" evidence="1"/>
<dbReference type="EMBL" id="CP000031">
    <property type="protein sequence ID" value="AAV96500.1"/>
    <property type="molecule type" value="Genomic_DNA"/>
</dbReference>
<dbReference type="RefSeq" id="WP_011048955.1">
    <property type="nucleotide sequence ID" value="NC_003911.12"/>
</dbReference>
<dbReference type="SMR" id="Q5LNE0"/>
<dbReference type="STRING" id="246200.SPO3271"/>
<dbReference type="PaxDb" id="246200-SPO3271"/>
<dbReference type="KEGG" id="sil:SPO3271"/>
<dbReference type="eggNOG" id="COG2041">
    <property type="taxonomic scope" value="Bacteria"/>
</dbReference>
<dbReference type="HOGENOM" id="CLU_045520_0_0_5"/>
<dbReference type="OrthoDB" id="9795587at2"/>
<dbReference type="Proteomes" id="UP000001023">
    <property type="component" value="Chromosome"/>
</dbReference>
<dbReference type="GO" id="GO:0042597">
    <property type="term" value="C:periplasmic space"/>
    <property type="evidence" value="ECO:0007669"/>
    <property type="project" value="UniProtKB-SubCell"/>
</dbReference>
<dbReference type="GO" id="GO:0046872">
    <property type="term" value="F:metal ion binding"/>
    <property type="evidence" value="ECO:0007669"/>
    <property type="project" value="UniProtKB-KW"/>
</dbReference>
<dbReference type="GO" id="GO:0043546">
    <property type="term" value="F:molybdopterin cofactor binding"/>
    <property type="evidence" value="ECO:0007669"/>
    <property type="project" value="UniProtKB-UniRule"/>
</dbReference>
<dbReference type="GO" id="GO:0016672">
    <property type="term" value="F:oxidoreductase activity, acting on a sulfur group of donors, quinone or similar compound as acceptor"/>
    <property type="evidence" value="ECO:0007669"/>
    <property type="project" value="UniProtKB-UniRule"/>
</dbReference>
<dbReference type="GO" id="GO:0030091">
    <property type="term" value="P:protein repair"/>
    <property type="evidence" value="ECO:0007669"/>
    <property type="project" value="UniProtKB-UniRule"/>
</dbReference>
<dbReference type="Gene3D" id="3.90.420.10">
    <property type="entry name" value="Oxidoreductase, molybdopterin-binding domain"/>
    <property type="match status" value="1"/>
</dbReference>
<dbReference type="HAMAP" id="MF_01206">
    <property type="entry name" value="MsrP"/>
    <property type="match status" value="1"/>
</dbReference>
<dbReference type="InterPro" id="IPR022867">
    <property type="entry name" value="MsrP"/>
</dbReference>
<dbReference type="InterPro" id="IPR000572">
    <property type="entry name" value="OxRdtase_Mopterin-bd_dom"/>
</dbReference>
<dbReference type="InterPro" id="IPR036374">
    <property type="entry name" value="OxRdtase_Mopterin-bd_sf"/>
</dbReference>
<dbReference type="InterPro" id="IPR006311">
    <property type="entry name" value="TAT_signal"/>
</dbReference>
<dbReference type="NCBIfam" id="NF003767">
    <property type="entry name" value="PRK05363.1"/>
    <property type="match status" value="1"/>
</dbReference>
<dbReference type="PANTHER" id="PTHR43032">
    <property type="entry name" value="PROTEIN-METHIONINE-SULFOXIDE REDUCTASE"/>
    <property type="match status" value="1"/>
</dbReference>
<dbReference type="PANTHER" id="PTHR43032:SF3">
    <property type="entry name" value="PROTEIN-METHIONINE-SULFOXIDE REDUCTASE CATALYTIC SUBUNIT MSRP"/>
    <property type="match status" value="1"/>
</dbReference>
<dbReference type="Pfam" id="PF00174">
    <property type="entry name" value="Oxidored_molyb"/>
    <property type="match status" value="1"/>
</dbReference>
<dbReference type="SUPFAM" id="SSF56524">
    <property type="entry name" value="Oxidoreductase molybdopterin-binding domain"/>
    <property type="match status" value="1"/>
</dbReference>
<dbReference type="PROSITE" id="PS51318">
    <property type="entry name" value="TAT"/>
    <property type="match status" value="1"/>
</dbReference>
<accession>Q5LNE0</accession>
<organism>
    <name type="scientific">Ruegeria pomeroyi (strain ATCC 700808 / DSM 15171 / DSS-3)</name>
    <name type="common">Silicibacter pomeroyi</name>
    <dbReference type="NCBI Taxonomy" id="246200"/>
    <lineage>
        <taxon>Bacteria</taxon>
        <taxon>Pseudomonadati</taxon>
        <taxon>Pseudomonadota</taxon>
        <taxon>Alphaproteobacteria</taxon>
        <taxon>Rhodobacterales</taxon>
        <taxon>Roseobacteraceae</taxon>
        <taxon>Ruegeria</taxon>
    </lineage>
</organism>
<feature type="signal peptide" description="Tat-type signal" evidence="1">
    <location>
        <begin position="1"/>
        <end position="44"/>
    </location>
</feature>
<feature type="chain" id="PRO_1000066167" description="Protein-methionine-sulfoxide reductase catalytic subunit MsrP" evidence="1">
    <location>
        <begin position="45"/>
        <end position="299"/>
    </location>
</feature>
<feature type="binding site" evidence="1">
    <location>
        <position position="59"/>
    </location>
    <ligand>
        <name>Mo-molybdopterin</name>
        <dbReference type="ChEBI" id="CHEBI:71302"/>
    </ligand>
</feature>
<feature type="binding site" evidence="1">
    <location>
        <begin position="62"/>
        <end position="63"/>
    </location>
    <ligand>
        <name>Mo-molybdopterin</name>
        <dbReference type="ChEBI" id="CHEBI:71302"/>
    </ligand>
</feature>
<feature type="binding site" evidence="1">
    <location>
        <position position="117"/>
    </location>
    <ligand>
        <name>Mo-molybdopterin</name>
        <dbReference type="ChEBI" id="CHEBI:71302"/>
    </ligand>
    <ligandPart>
        <name>Mo</name>
        <dbReference type="ChEBI" id="CHEBI:28685"/>
    </ligandPart>
</feature>
<feature type="binding site" evidence="1">
    <location>
        <position position="152"/>
    </location>
    <ligand>
        <name>Mo-molybdopterin</name>
        <dbReference type="ChEBI" id="CHEBI:71302"/>
    </ligand>
</feature>
<feature type="binding site" evidence="1">
    <location>
        <position position="200"/>
    </location>
    <ligand>
        <name>Mo-molybdopterin</name>
        <dbReference type="ChEBI" id="CHEBI:71302"/>
    </ligand>
</feature>
<feature type="binding site" evidence="1">
    <location>
        <position position="205"/>
    </location>
    <ligand>
        <name>Mo-molybdopterin</name>
        <dbReference type="ChEBI" id="CHEBI:71302"/>
    </ligand>
</feature>
<feature type="binding site" evidence="1">
    <location>
        <begin position="216"/>
        <end position="218"/>
    </location>
    <ligand>
        <name>Mo-molybdopterin</name>
        <dbReference type="ChEBI" id="CHEBI:71302"/>
    </ligand>
</feature>
<sequence>MAHRWINDLTPADITPRGAWMNRRQVMAGMAGAGLAAFAGSAQAETLEPNSWEEITSYNNFYEFGTGKDDPAAYAHLLKTVPWSIKIDGMVERPGDYDFQDILSEMTIEERIYRFRCVEAWSMVIPWNGFELADLLAMAGVQEGAKYVAFETLYRPEEMPGTRYPVLEWPYREGLRLDEAMHPLTLMATGIYGKPLPNQNGAPLRLVVPWKYGFKSIKSIVRITLTDREPPASWNMAIPNEYGFYSNVNPEVNHPRWSQASERRIGGGLFAKRQPTLMFNGYEKEVAGLYQGMDLAKYF</sequence>
<gene>
    <name evidence="1" type="primary">msrP</name>
    <name type="ordered locus">SPO3271</name>
</gene>
<comment type="function">
    <text evidence="1">Part of the MsrPQ system that repairs oxidized periplasmic proteins containing methionine sulfoxide residues (Met-O), using respiratory chain electrons. Thus protects these proteins from oxidative-stress damage caused by reactive species of oxygen and chlorine generated by the host defense mechanisms. MsrPQ is essential for the maintenance of envelope integrity under bleach stress, rescuing a wide series of structurally unrelated periplasmic proteins from methionine oxidation. The catalytic subunit MsrP is non-stereospecific, being able to reduce both (R-) and (S-) diastereoisomers of methionine sulfoxide.</text>
</comment>
<comment type="catalytic activity">
    <reaction evidence="1">
        <text>L-methionyl-[protein] + a quinone + H2O = L-methionyl-(S)-S-oxide-[protein] + a quinol</text>
        <dbReference type="Rhea" id="RHEA:51292"/>
        <dbReference type="Rhea" id="RHEA-COMP:12313"/>
        <dbReference type="Rhea" id="RHEA-COMP:12315"/>
        <dbReference type="ChEBI" id="CHEBI:15377"/>
        <dbReference type="ChEBI" id="CHEBI:16044"/>
        <dbReference type="ChEBI" id="CHEBI:24646"/>
        <dbReference type="ChEBI" id="CHEBI:44120"/>
        <dbReference type="ChEBI" id="CHEBI:132124"/>
    </reaction>
</comment>
<comment type="catalytic activity">
    <reaction evidence="1">
        <text>L-methionyl-[protein] + a quinone + H2O = L-methionyl-(R)-S-oxide-[protein] + a quinol</text>
        <dbReference type="Rhea" id="RHEA:51296"/>
        <dbReference type="Rhea" id="RHEA-COMP:12313"/>
        <dbReference type="Rhea" id="RHEA-COMP:12314"/>
        <dbReference type="ChEBI" id="CHEBI:15377"/>
        <dbReference type="ChEBI" id="CHEBI:16044"/>
        <dbReference type="ChEBI" id="CHEBI:24646"/>
        <dbReference type="ChEBI" id="CHEBI:45764"/>
        <dbReference type="ChEBI" id="CHEBI:132124"/>
    </reaction>
</comment>
<comment type="cofactor">
    <cofactor evidence="1">
        <name>Mo-molybdopterin</name>
        <dbReference type="ChEBI" id="CHEBI:71302"/>
    </cofactor>
    <text evidence="1">Binds 1 Mo-molybdopterin (Mo-MPT) cofactor per subunit.</text>
</comment>
<comment type="subunit">
    <text evidence="1">Heterodimer of a catalytic subunit (MsrP) and a heme-binding subunit (MsrQ).</text>
</comment>
<comment type="subcellular location">
    <subcellularLocation>
        <location evidence="1">Periplasm</location>
    </subcellularLocation>
    <text evidence="1">Is attached to the inner membrane when interacting with the MsrQ subunit.</text>
</comment>
<comment type="PTM">
    <text evidence="1">Predicted to be exported by the Tat system. The position of the signal peptide cleavage has not been experimentally proven.</text>
</comment>
<comment type="similarity">
    <text evidence="1">Belongs to the MsrP family.</text>
</comment>
<proteinExistence type="inferred from homology"/>
<name>MSRP_RUEPO</name>
<keyword id="KW-0479">Metal-binding</keyword>
<keyword id="KW-0500">Molybdenum</keyword>
<keyword id="KW-0560">Oxidoreductase</keyword>
<keyword id="KW-0574">Periplasm</keyword>
<keyword id="KW-1185">Reference proteome</keyword>
<keyword id="KW-0732">Signal</keyword>
<evidence type="ECO:0000255" key="1">
    <source>
        <dbReference type="HAMAP-Rule" id="MF_01206"/>
    </source>
</evidence>